<keyword id="KW-0167">Capsid protein</keyword>
<keyword id="KW-1139">Helical capsid protein</keyword>
<keyword id="KW-1035">Host cytoplasm</keyword>
<keyword id="KW-0597">Phosphoprotein</keyword>
<keyword id="KW-1185">Reference proteome</keyword>
<keyword id="KW-0687">Ribonucleoprotein</keyword>
<keyword id="KW-0694">RNA-binding</keyword>
<keyword id="KW-0543">Viral nucleoprotein</keyword>
<keyword id="KW-0946">Virion</keyword>
<sequence length="459" mass="50679">MTTSAEKLAKLEQLRKERAAVIQKPTTQVSSEPVVTEKPRVRNTAYDSLAGVTIGKRASRKWSDADIKSIPIYDVHQVPAAQVIALGKDLLTQIQNNSVNTVTVDYCLVLAVSIPKPAMTSFEHLLTPPSPEQGTRLDFTQPQAGVSNRSGLTAIEKMTLNATRKNLLTETDEEKRARYEAIIKKMEDQEAGLGTSKATVVTSETEAAAYGFLAATLLKLYAKSTESYVAGLAQIRNRFAAWYDCPKAVLDAFQPTEAALVSLRAAFARRPEVLSTWTLWVAVNENRTPGLLVTQQGLLNYLACQQFAYPGMHAYTLLIEIHEHTGMKFSDLLVEMDCPATRAGVREALELIRDYEITKDHPKRTTYFRYARNWDPKYFGALQSTECKTLVYVAASVSKKVSAQGANGDPMEIFAIKNLDATIKARLDPVAENMAGKILDQMLMDEMSGASWATKASTQ</sequence>
<evidence type="ECO:0000250" key="1"/>
<evidence type="ECO:0000305" key="2"/>
<feature type="chain" id="PRO_0000297612" description="Nucleoprotein">
    <location>
        <begin position="1"/>
        <end position="459"/>
    </location>
</feature>
<feature type="sequence variant" description="In strain: Isolate 2.">
    <original>P</original>
    <variation>T</variation>
    <location>
        <position position="131"/>
    </location>
</feature>
<reference key="1">
    <citation type="journal article" date="1994" name="Virology">
        <title>Analysis of the nucleocapsid gene of lettuce necrotic yellows rhabdovirus.</title>
        <authorList>
            <person name="Wetzel T."/>
            <person name="Dietzgen R.G."/>
            <person name="Geering A.D."/>
            <person name="Dale J.L."/>
        </authorList>
    </citation>
    <scope>NUCLEOTIDE SEQUENCE [GENOMIC RNA]</scope>
</reference>
<reference key="2">
    <citation type="journal article" date="2005" name="Arch. Virol.">
        <title>Nucleocapsid gene variability reveals two subgroups of Lettuce necrotic yellows virus.</title>
        <authorList>
            <person name="Callaghan B."/>
            <person name="Dietzgen R.G."/>
        </authorList>
    </citation>
    <scope>NUCLEOTIDE SEQUENCE [GENOMIC RNA]</scope>
    <source>
        <strain>Isolate 2</strain>
    </source>
</reference>
<reference key="3">
    <citation type="journal article" date="2006" name="Virus Res.">
        <title>Completion of the genome sequence of Lettuce necrotic yellows virus, type species of the genus Cytorhabdovirus.</title>
        <authorList>
            <person name="Dietzgen R.G."/>
            <person name="Callaghan B."/>
            <person name="Wetzel T."/>
            <person name="Dale J.L."/>
        </authorList>
    </citation>
    <scope>NUCLEOTIDE SEQUENCE [GENOMIC RNA]</scope>
</reference>
<name>NCAP_LNYV3</name>
<accession>Q86134</accession>
<accession>Q4W390</accession>
<dbReference type="EMBL" id="L30103">
    <property type="protein sequence ID" value="AAA47287.1"/>
    <property type="molecule type" value="Genomic_RNA"/>
</dbReference>
<dbReference type="EMBL" id="AJ746191">
    <property type="protein sequence ID" value="CAG34083.1"/>
    <property type="molecule type" value="Genomic_RNA"/>
</dbReference>
<dbReference type="EMBL" id="AJ867584">
    <property type="protein sequence ID" value="CAI30421.1"/>
    <property type="molecule type" value="Genomic_RNA"/>
</dbReference>
<dbReference type="RefSeq" id="YP_425087.1">
    <property type="nucleotide sequence ID" value="NC_007642.1"/>
</dbReference>
<dbReference type="GeneID" id="3844364"/>
<dbReference type="KEGG" id="vg:3844364"/>
<dbReference type="Proteomes" id="UP000008592">
    <property type="component" value="Segment"/>
</dbReference>
<dbReference type="GO" id="GO:0019029">
    <property type="term" value="C:helical viral capsid"/>
    <property type="evidence" value="ECO:0007669"/>
    <property type="project" value="UniProtKB-KW"/>
</dbReference>
<dbReference type="GO" id="GO:0030430">
    <property type="term" value="C:host cell cytoplasm"/>
    <property type="evidence" value="ECO:0007669"/>
    <property type="project" value="UniProtKB-SubCell"/>
</dbReference>
<dbReference type="GO" id="GO:1990904">
    <property type="term" value="C:ribonucleoprotein complex"/>
    <property type="evidence" value="ECO:0007669"/>
    <property type="project" value="UniProtKB-KW"/>
</dbReference>
<dbReference type="GO" id="GO:0019013">
    <property type="term" value="C:viral nucleocapsid"/>
    <property type="evidence" value="ECO:0007669"/>
    <property type="project" value="UniProtKB-KW"/>
</dbReference>
<dbReference type="GO" id="GO:0003723">
    <property type="term" value="F:RNA binding"/>
    <property type="evidence" value="ECO:0007669"/>
    <property type="project" value="UniProtKB-KW"/>
</dbReference>
<dbReference type="InterPro" id="IPR004902">
    <property type="entry name" value="Rhabdo_ncap_2"/>
</dbReference>
<dbReference type="Pfam" id="PF03216">
    <property type="entry name" value="Rhabdo_ncap_2"/>
    <property type="match status" value="1"/>
</dbReference>
<proteinExistence type="inferred from homology"/>
<protein>
    <recommendedName>
        <fullName>Nucleoprotein</fullName>
        <shortName>NP</shortName>
    </recommendedName>
    <alternativeName>
        <fullName>Nucleocapsid protein</fullName>
        <shortName>Protein N</shortName>
    </alternativeName>
</protein>
<gene>
    <name type="primary">N</name>
</gene>
<organismHost>
    <name type="scientific">Embergeria</name>
    <dbReference type="NCBI Taxonomy" id="43191"/>
</organismHost>
<organismHost>
    <name type="scientific">Lactuca sativa</name>
    <name type="common">Garden lettuce</name>
    <dbReference type="NCBI Taxonomy" id="4236"/>
</organismHost>
<organismHost>
    <name type="scientific">Reichardia tingitana</name>
    <dbReference type="NCBI Taxonomy" id="43208"/>
</organismHost>
<organismHost>
    <name type="scientific">Sonchus hydrophilus</name>
    <dbReference type="NCBI Taxonomy" id="255580"/>
</organismHost>
<organismHost>
    <name type="scientific">Sonchus oleraceus</name>
    <name type="common">Common sowthistle</name>
    <dbReference type="NCBI Taxonomy" id="50207"/>
</organismHost>
<organism>
    <name type="scientific">Lettuce necrotic yellows virus (isolate 318)</name>
    <name type="common">LNYV</name>
    <dbReference type="NCBI Taxonomy" id="928304"/>
    <lineage>
        <taxon>Viruses</taxon>
        <taxon>Riboviria</taxon>
        <taxon>Orthornavirae</taxon>
        <taxon>Negarnaviricota</taxon>
        <taxon>Haploviricotina</taxon>
        <taxon>Monjiviricetes</taxon>
        <taxon>Mononegavirales</taxon>
        <taxon>Rhabdoviridae</taxon>
        <taxon>Betarhabdovirinae</taxon>
        <taxon>Cytorhabdovirus</taxon>
        <taxon>Cytorhabdovirus lactucanecante</taxon>
    </lineage>
</organism>
<comment type="function">
    <text evidence="1">Encapsidates the genome, protecting it from nucleases. If expressed without protein P it binds non-specifically RNA and therefore can bind it's own mRNA. Interaction with protein P abolishes any non-specific RNA binding, and prevents phosphorylation. The soluble N-P complex encapsidates specifically the genomic RNA, with protein N protecting the genome like a pearl necklace. The encapsidated genomic RNA is termed the nucleocapsid (NC) and serves as template for viral transcription and replication. Protein N binds protein P in the NC through a different interaction, and can be phosphorylated. Subsequent viral replication is dependent on intracellular concentration of newly synthesized protein N. During replication, encapsidation by protein N is coupled to RNA synthesis and all replicative products are resistant to nucleases (By similarity).</text>
</comment>
<comment type="subunit">
    <text evidence="1">Homomultimerizes to form the nucleocapsid. Binds to viral genomic RNA (By similarity).</text>
</comment>
<comment type="subcellular location">
    <subcellularLocation>
        <location>Virion</location>
    </subcellularLocation>
    <subcellularLocation>
        <location evidence="1">Host cytoplasm</location>
    </subcellularLocation>
</comment>
<comment type="similarity">
    <text evidence="2">Belongs to the cytorhabdovirus nucleocapsid protein family.</text>
</comment>